<accession>A6T6E6</accession>
<proteinExistence type="inferred from homology"/>
<organism>
    <name type="scientific">Klebsiella pneumoniae subsp. pneumoniae (strain ATCC 700721 / MGH 78578)</name>
    <dbReference type="NCBI Taxonomy" id="272620"/>
    <lineage>
        <taxon>Bacteria</taxon>
        <taxon>Pseudomonadati</taxon>
        <taxon>Pseudomonadota</taxon>
        <taxon>Gammaproteobacteria</taxon>
        <taxon>Enterobacterales</taxon>
        <taxon>Enterobacteriaceae</taxon>
        <taxon>Klebsiella/Raoultella group</taxon>
        <taxon>Klebsiella</taxon>
        <taxon>Klebsiella pneumoniae complex</taxon>
    </lineage>
</organism>
<feature type="chain" id="PRO_1000062023" description="5-oxoprolinase subunit A">
    <location>
        <begin position="1"/>
        <end position="247"/>
    </location>
</feature>
<evidence type="ECO:0000255" key="1">
    <source>
        <dbReference type="HAMAP-Rule" id="MF_00691"/>
    </source>
</evidence>
<keyword id="KW-0067">ATP-binding</keyword>
<keyword id="KW-0378">Hydrolase</keyword>
<keyword id="KW-0547">Nucleotide-binding</keyword>
<protein>
    <recommendedName>
        <fullName evidence="1">5-oxoprolinase subunit A</fullName>
        <shortName evidence="1">5-OPase subunit A</shortName>
        <ecNumber evidence="1">3.5.2.9</ecNumber>
    </recommendedName>
    <alternativeName>
        <fullName evidence="1">5-oxoprolinase (ATP-hydrolyzing) subunit A</fullName>
    </alternativeName>
</protein>
<name>PXPA_KLEP7</name>
<comment type="function">
    <text evidence="1">Catalyzes the cleavage of 5-oxoproline to form L-glutamate coupled to the hydrolysis of ATP to ADP and inorganic phosphate.</text>
</comment>
<comment type="catalytic activity">
    <reaction evidence="1">
        <text>5-oxo-L-proline + ATP + 2 H2O = L-glutamate + ADP + phosphate + H(+)</text>
        <dbReference type="Rhea" id="RHEA:10348"/>
        <dbReference type="ChEBI" id="CHEBI:15377"/>
        <dbReference type="ChEBI" id="CHEBI:15378"/>
        <dbReference type="ChEBI" id="CHEBI:29985"/>
        <dbReference type="ChEBI" id="CHEBI:30616"/>
        <dbReference type="ChEBI" id="CHEBI:43474"/>
        <dbReference type="ChEBI" id="CHEBI:58402"/>
        <dbReference type="ChEBI" id="CHEBI:456216"/>
        <dbReference type="EC" id="3.5.2.9"/>
    </reaction>
</comment>
<comment type="subunit">
    <text evidence="1">Forms a complex composed of PxpA, PxpB and PxpC.</text>
</comment>
<comment type="similarity">
    <text evidence="1">Belongs to the LamB/PxpA family.</text>
</comment>
<sequence length="247" mass="26420">MKIDLNADLGEGCASDSALLQLVSSANIACGFHAGDAVLMQQCVREALKNGVAIGAHPSFPDRENFGRTAMQLPPETVYAQVLYQIGALAAIVHAQGGELRHVKPHGMLYNQAAKEPPLADAIARAVRDADADLVLVGLAGSELIRAGQHYQLTTRQEVFADRGYQADGSLVPRSQPGALIESEEQALAQTLEMVQHNRVRSLSGEWAHVKAETVCLHGDGAHALDFARRLRAAFAGRNIDVSADLE</sequence>
<dbReference type="EC" id="3.5.2.9" evidence="1"/>
<dbReference type="EMBL" id="CP000647">
    <property type="protein sequence ID" value="ABR76167.1"/>
    <property type="molecule type" value="Genomic_DNA"/>
</dbReference>
<dbReference type="RefSeq" id="WP_004176856.1">
    <property type="nucleotide sequence ID" value="NC_009648.1"/>
</dbReference>
<dbReference type="SMR" id="A6T6E6"/>
<dbReference type="STRING" id="272620.KPN_00724"/>
<dbReference type="PaxDb" id="272620-KPN_00724"/>
<dbReference type="EnsemblBacteria" id="ABR76167">
    <property type="protein sequence ID" value="ABR76167"/>
    <property type="gene ID" value="KPN_00724"/>
</dbReference>
<dbReference type="KEGG" id="kpn:KPN_00724"/>
<dbReference type="HOGENOM" id="CLU_069535_0_0_6"/>
<dbReference type="Proteomes" id="UP000000265">
    <property type="component" value="Chromosome"/>
</dbReference>
<dbReference type="GO" id="GO:0017168">
    <property type="term" value="F:5-oxoprolinase (ATP-hydrolyzing) activity"/>
    <property type="evidence" value="ECO:0007669"/>
    <property type="project" value="UniProtKB-UniRule"/>
</dbReference>
<dbReference type="GO" id="GO:0005524">
    <property type="term" value="F:ATP binding"/>
    <property type="evidence" value="ECO:0007669"/>
    <property type="project" value="UniProtKB-UniRule"/>
</dbReference>
<dbReference type="GO" id="GO:0005975">
    <property type="term" value="P:carbohydrate metabolic process"/>
    <property type="evidence" value="ECO:0007669"/>
    <property type="project" value="InterPro"/>
</dbReference>
<dbReference type="CDD" id="cd10800">
    <property type="entry name" value="LamB_YcsF_YbgL_like"/>
    <property type="match status" value="1"/>
</dbReference>
<dbReference type="Gene3D" id="3.20.20.370">
    <property type="entry name" value="Glycoside hydrolase/deacetylase"/>
    <property type="match status" value="1"/>
</dbReference>
<dbReference type="HAMAP" id="MF_00691">
    <property type="entry name" value="PxpA"/>
    <property type="match status" value="1"/>
</dbReference>
<dbReference type="InterPro" id="IPR011330">
    <property type="entry name" value="Glyco_hydro/deAcase_b/a-brl"/>
</dbReference>
<dbReference type="InterPro" id="IPR005501">
    <property type="entry name" value="LamB/YcsF/PxpA-like"/>
</dbReference>
<dbReference type="NCBIfam" id="NF003812">
    <property type="entry name" value="PRK05406.1-1"/>
    <property type="match status" value="1"/>
</dbReference>
<dbReference type="NCBIfam" id="NF003814">
    <property type="entry name" value="PRK05406.1-3"/>
    <property type="match status" value="1"/>
</dbReference>
<dbReference type="NCBIfam" id="NF003815">
    <property type="entry name" value="PRK05406.1-4"/>
    <property type="match status" value="1"/>
</dbReference>
<dbReference type="NCBIfam" id="NF003816">
    <property type="entry name" value="PRK05406.1-5"/>
    <property type="match status" value="1"/>
</dbReference>
<dbReference type="PANTHER" id="PTHR30292:SF0">
    <property type="entry name" value="5-OXOPROLINASE SUBUNIT A"/>
    <property type="match status" value="1"/>
</dbReference>
<dbReference type="PANTHER" id="PTHR30292">
    <property type="entry name" value="UNCHARACTERIZED PROTEIN YBGL-RELATED"/>
    <property type="match status" value="1"/>
</dbReference>
<dbReference type="Pfam" id="PF03746">
    <property type="entry name" value="LamB_YcsF"/>
    <property type="match status" value="1"/>
</dbReference>
<dbReference type="SUPFAM" id="SSF88713">
    <property type="entry name" value="Glycoside hydrolase/deacetylase"/>
    <property type="match status" value="1"/>
</dbReference>
<gene>
    <name evidence="1" type="primary">pxpA</name>
    <name type="ordered locus">KPN78578_07060</name>
    <name type="ORF">KPN_00724</name>
</gene>
<reference key="1">
    <citation type="submission" date="2006-09" db="EMBL/GenBank/DDBJ databases">
        <authorList>
            <consortium name="The Klebsiella pneumonia Genome Sequencing Project"/>
            <person name="McClelland M."/>
            <person name="Sanderson E.K."/>
            <person name="Spieth J."/>
            <person name="Clifton W.S."/>
            <person name="Latreille P."/>
            <person name="Sabo A."/>
            <person name="Pepin K."/>
            <person name="Bhonagiri V."/>
            <person name="Porwollik S."/>
            <person name="Ali J."/>
            <person name="Wilson R.K."/>
        </authorList>
    </citation>
    <scope>NUCLEOTIDE SEQUENCE [LARGE SCALE GENOMIC DNA]</scope>
    <source>
        <strain>ATCC 700721 / MGH 78578</strain>
    </source>
</reference>